<accession>B8CS27</accession>
<evidence type="ECO:0000255" key="1">
    <source>
        <dbReference type="HAMAP-Rule" id="MF_01151"/>
    </source>
</evidence>
<organism>
    <name type="scientific">Shewanella piezotolerans (strain WP3 / JCM 13877)</name>
    <dbReference type="NCBI Taxonomy" id="225849"/>
    <lineage>
        <taxon>Bacteria</taxon>
        <taxon>Pseudomonadati</taxon>
        <taxon>Pseudomonadota</taxon>
        <taxon>Gammaproteobacteria</taxon>
        <taxon>Alteromonadales</taxon>
        <taxon>Shewanellaceae</taxon>
        <taxon>Shewanella</taxon>
    </lineage>
</organism>
<dbReference type="EMBL" id="CP000472">
    <property type="protein sequence ID" value="ACJ30317.1"/>
    <property type="molecule type" value="Genomic_DNA"/>
</dbReference>
<dbReference type="RefSeq" id="WP_020913663.1">
    <property type="nucleotide sequence ID" value="NC_011566.1"/>
</dbReference>
<dbReference type="SMR" id="B8CS27"/>
<dbReference type="STRING" id="225849.swp_3627"/>
<dbReference type="KEGG" id="swp:swp_3627"/>
<dbReference type="eggNOG" id="COG0576">
    <property type="taxonomic scope" value="Bacteria"/>
</dbReference>
<dbReference type="HOGENOM" id="CLU_057217_6_0_6"/>
<dbReference type="OrthoDB" id="9789811at2"/>
<dbReference type="Proteomes" id="UP000000753">
    <property type="component" value="Chromosome"/>
</dbReference>
<dbReference type="GO" id="GO:0005829">
    <property type="term" value="C:cytosol"/>
    <property type="evidence" value="ECO:0007669"/>
    <property type="project" value="TreeGrafter"/>
</dbReference>
<dbReference type="GO" id="GO:0000774">
    <property type="term" value="F:adenyl-nucleotide exchange factor activity"/>
    <property type="evidence" value="ECO:0007669"/>
    <property type="project" value="InterPro"/>
</dbReference>
<dbReference type="GO" id="GO:0042803">
    <property type="term" value="F:protein homodimerization activity"/>
    <property type="evidence" value="ECO:0007669"/>
    <property type="project" value="InterPro"/>
</dbReference>
<dbReference type="GO" id="GO:0051087">
    <property type="term" value="F:protein-folding chaperone binding"/>
    <property type="evidence" value="ECO:0007669"/>
    <property type="project" value="InterPro"/>
</dbReference>
<dbReference type="GO" id="GO:0051082">
    <property type="term" value="F:unfolded protein binding"/>
    <property type="evidence" value="ECO:0007669"/>
    <property type="project" value="TreeGrafter"/>
</dbReference>
<dbReference type="GO" id="GO:0006457">
    <property type="term" value="P:protein folding"/>
    <property type="evidence" value="ECO:0007669"/>
    <property type="project" value="InterPro"/>
</dbReference>
<dbReference type="CDD" id="cd00446">
    <property type="entry name" value="GrpE"/>
    <property type="match status" value="1"/>
</dbReference>
<dbReference type="FunFam" id="2.30.22.10:FF:000001">
    <property type="entry name" value="Protein GrpE"/>
    <property type="match status" value="1"/>
</dbReference>
<dbReference type="Gene3D" id="3.90.20.20">
    <property type="match status" value="1"/>
</dbReference>
<dbReference type="Gene3D" id="2.30.22.10">
    <property type="entry name" value="Head domain of nucleotide exchange factor GrpE"/>
    <property type="match status" value="1"/>
</dbReference>
<dbReference type="HAMAP" id="MF_01151">
    <property type="entry name" value="GrpE"/>
    <property type="match status" value="1"/>
</dbReference>
<dbReference type="InterPro" id="IPR000740">
    <property type="entry name" value="GrpE"/>
</dbReference>
<dbReference type="InterPro" id="IPR013805">
    <property type="entry name" value="GrpE_coiled_coil"/>
</dbReference>
<dbReference type="InterPro" id="IPR009012">
    <property type="entry name" value="GrpE_head"/>
</dbReference>
<dbReference type="NCBIfam" id="NF010737">
    <property type="entry name" value="PRK14139.1"/>
    <property type="match status" value="1"/>
</dbReference>
<dbReference type="NCBIfam" id="NF010738">
    <property type="entry name" value="PRK14140.1"/>
    <property type="match status" value="1"/>
</dbReference>
<dbReference type="NCBIfam" id="NF010748">
    <property type="entry name" value="PRK14150.1"/>
    <property type="match status" value="1"/>
</dbReference>
<dbReference type="PANTHER" id="PTHR21237">
    <property type="entry name" value="GRPE PROTEIN"/>
    <property type="match status" value="1"/>
</dbReference>
<dbReference type="PANTHER" id="PTHR21237:SF23">
    <property type="entry name" value="GRPE PROTEIN HOMOLOG, MITOCHONDRIAL"/>
    <property type="match status" value="1"/>
</dbReference>
<dbReference type="Pfam" id="PF01025">
    <property type="entry name" value="GrpE"/>
    <property type="match status" value="1"/>
</dbReference>
<dbReference type="PRINTS" id="PR00773">
    <property type="entry name" value="GRPEPROTEIN"/>
</dbReference>
<dbReference type="SUPFAM" id="SSF58014">
    <property type="entry name" value="Coiled-coil domain of nucleotide exchange factor GrpE"/>
    <property type="match status" value="1"/>
</dbReference>
<dbReference type="SUPFAM" id="SSF51064">
    <property type="entry name" value="Head domain of nucleotide exchange factor GrpE"/>
    <property type="match status" value="1"/>
</dbReference>
<dbReference type="PROSITE" id="PS01071">
    <property type="entry name" value="GRPE"/>
    <property type="match status" value="1"/>
</dbReference>
<name>GRPE_SHEPW</name>
<proteinExistence type="inferred from homology"/>
<feature type="chain" id="PRO_1000137623" description="Protein GrpE">
    <location>
        <begin position="1"/>
        <end position="200"/>
    </location>
</feature>
<gene>
    <name evidence="1" type="primary">grpE</name>
    <name type="ordered locus">swp_3627</name>
</gene>
<comment type="function">
    <text evidence="1">Participates actively in the response to hyperosmotic and heat shock by preventing the aggregation of stress-denatured proteins, in association with DnaK and GrpE. It is the nucleotide exchange factor for DnaK and may function as a thermosensor. Unfolded proteins bind initially to DnaJ; upon interaction with the DnaJ-bound protein, DnaK hydrolyzes its bound ATP, resulting in the formation of a stable complex. GrpE releases ADP from DnaK; ATP binding to DnaK triggers the release of the substrate protein, thus completing the reaction cycle. Several rounds of ATP-dependent interactions between DnaJ, DnaK and GrpE are required for fully efficient folding.</text>
</comment>
<comment type="subunit">
    <text evidence="1">Homodimer.</text>
</comment>
<comment type="subcellular location">
    <subcellularLocation>
        <location evidence="1">Cytoplasm</location>
    </subcellularLocation>
</comment>
<comment type="similarity">
    <text evidence="1">Belongs to the GrpE family.</text>
</comment>
<reference key="1">
    <citation type="journal article" date="2008" name="PLoS ONE">
        <title>Environmental adaptation: genomic analysis of the piezotolerant and psychrotolerant deep-sea iron reducing bacterium Shewanella piezotolerans WP3.</title>
        <authorList>
            <person name="Wang F."/>
            <person name="Wang J."/>
            <person name="Jian H."/>
            <person name="Zhang B."/>
            <person name="Li S."/>
            <person name="Wang F."/>
            <person name="Zeng X."/>
            <person name="Gao L."/>
            <person name="Bartlett D.H."/>
            <person name="Yu J."/>
            <person name="Hu S."/>
            <person name="Xiao X."/>
        </authorList>
    </citation>
    <scope>NUCLEOTIDE SEQUENCE [LARGE SCALE GENOMIC DNA]</scope>
    <source>
        <strain>WP3 / JCM 13877</strain>
    </source>
</reference>
<keyword id="KW-0143">Chaperone</keyword>
<keyword id="KW-0963">Cytoplasm</keyword>
<keyword id="KW-0346">Stress response</keyword>
<protein>
    <recommendedName>
        <fullName evidence="1">Protein GrpE</fullName>
    </recommendedName>
    <alternativeName>
        <fullName evidence="1">HSP-70 cofactor</fullName>
    </alternativeName>
</protein>
<sequence length="200" mass="22072">MSNETNKAQDNQIDEQVESIVEGELLTEGSDEASLMDELTQANFRVEELEKALQEAQSTVDSQKDSVIRAAAEVDNIRRRAAIDVEKARKFALEKFANELLPVLDNMERALQGTDAEAEATKAIYEGVELTAKSFVSAVEKFGLTQVDPQGEAFNPELHQAIGMQPSTDFAANTVMMVMQKGYTLNERLLRPAMVMVSQG</sequence>